<accession>P0DMD6</accession>
<protein>
    <recommendedName>
        <fullName evidence="2">Natriuretic peptide TsNP</fullName>
    </recommendedName>
</protein>
<proteinExistence type="evidence at protein level"/>
<dbReference type="GO" id="GO:0005576">
    <property type="term" value="C:extracellular region"/>
    <property type="evidence" value="ECO:0007669"/>
    <property type="project" value="UniProtKB-SubCell"/>
</dbReference>
<dbReference type="GO" id="GO:0005179">
    <property type="term" value="F:hormone activity"/>
    <property type="evidence" value="ECO:0007669"/>
    <property type="project" value="InterPro"/>
</dbReference>
<dbReference type="GO" id="GO:0090729">
    <property type="term" value="F:toxin activity"/>
    <property type="evidence" value="ECO:0007669"/>
    <property type="project" value="UniProtKB-KW"/>
</dbReference>
<dbReference type="GO" id="GO:0008217">
    <property type="term" value="P:regulation of blood pressure"/>
    <property type="evidence" value="ECO:0007669"/>
    <property type="project" value="UniProtKB-KW"/>
</dbReference>
<dbReference type="GO" id="GO:0042311">
    <property type="term" value="P:vasodilation"/>
    <property type="evidence" value="ECO:0007669"/>
    <property type="project" value="UniProtKB-KW"/>
</dbReference>
<dbReference type="InterPro" id="IPR000663">
    <property type="entry name" value="Natr_peptide"/>
</dbReference>
<dbReference type="InterPro" id="IPR030480">
    <property type="entry name" value="Natr_peptide_CS"/>
</dbReference>
<dbReference type="InterPro" id="IPR002408">
    <property type="entry name" value="Natriuretic_peptide_brain"/>
</dbReference>
<dbReference type="Pfam" id="PF00212">
    <property type="entry name" value="ANP"/>
    <property type="match status" value="1"/>
</dbReference>
<dbReference type="PRINTS" id="PR00712">
    <property type="entry name" value="BNATPEPTIDE"/>
</dbReference>
<dbReference type="PRINTS" id="PR00710">
    <property type="entry name" value="NATPEPTIDES"/>
</dbReference>
<dbReference type="SMART" id="SM00183">
    <property type="entry name" value="NAT_PEP"/>
    <property type="match status" value="1"/>
</dbReference>
<dbReference type="PROSITE" id="PS00263">
    <property type="entry name" value="NATRIURETIC_PEPTIDE"/>
    <property type="match status" value="1"/>
</dbReference>
<evidence type="ECO:0000269" key="1">
    <source>
    </source>
</evidence>
<evidence type="ECO:0000303" key="2">
    <source>
    </source>
</evidence>
<evidence type="ECO:0000305" key="3"/>
<evidence type="ECO:0000305" key="4">
    <source>
    </source>
</evidence>
<keyword id="KW-0903">Direct protein sequencing</keyword>
<keyword id="KW-1015">Disulfide bond</keyword>
<keyword id="KW-0382">Hypotensive agent</keyword>
<keyword id="KW-0964">Secreted</keyword>
<keyword id="KW-0800">Toxin</keyword>
<keyword id="KW-0838">Vasoactive</keyword>
<keyword id="KW-0840">Vasodilator</keyword>
<name>TSNP_TITSE</name>
<feature type="peptide" id="PRO_0000425736" description="Natriuretic peptide TsNP" evidence="1">
    <location>
        <begin position="1"/>
        <end position="21"/>
    </location>
</feature>
<feature type="disulfide bond" evidence="4">
    <location>
        <begin position="5"/>
        <end position="21"/>
    </location>
</feature>
<comment type="function">
    <text evidence="1">Scorpion venom natriuretic peptide that increases the perfusion pressure, glomerular filtration rate and urinary flow in the isolated perfused rat kidney assay. Induces a decrease of the percentages of renal transport for sodium, potassium and chloride and an increase of the urinary cGMP concentration. Also down-regulates the mRNA expression of natriuretic peptide receptor 1 (NPR1) in the kidneys whereas it up-regulates those of NPR2, NPR3 and guanylyl cyclase C (GUCY2C) mRNAs. May exhibit hypotensive and vasodepressor activities.</text>
</comment>
<comment type="subcellular location">
    <subcellularLocation>
        <location evidence="1">Secreted</location>
    </subcellularLocation>
</comment>
<comment type="tissue specificity">
    <text evidence="4">Expressed by the venom gland.</text>
</comment>
<comment type="mass spectrometry" mass="2190.64" method="MALDI" evidence="1"/>
<comment type="similarity">
    <text evidence="3">Belongs to the natriuretic peptide family.</text>
</comment>
<sequence length="21" mass="2191">KLSGCFGFKLDRIGTMSGLGC</sequence>
<organism>
    <name type="scientific">Tityus serrulatus</name>
    <name type="common">Brazilian scorpion</name>
    <dbReference type="NCBI Taxonomy" id="6887"/>
    <lineage>
        <taxon>Eukaryota</taxon>
        <taxon>Metazoa</taxon>
        <taxon>Ecdysozoa</taxon>
        <taxon>Arthropoda</taxon>
        <taxon>Chelicerata</taxon>
        <taxon>Arachnida</taxon>
        <taxon>Scorpiones</taxon>
        <taxon>Buthida</taxon>
        <taxon>Buthoidea</taxon>
        <taxon>Buthidae</taxon>
        <taxon>Tityus</taxon>
    </lineage>
</organism>
<reference key="1">
    <citation type="journal article" date="2013" name="Toxicon">
        <title>Isolation, homology modeling and renal effects of a C-type natriuretic peptide from the venom of the Brazilian yellow scorpion (Tityus serrulatus).</title>
        <authorList>
            <person name="Alves R.S."/>
            <person name="Ximenes R.M."/>
            <person name="Jorge A.R."/>
            <person name="Nascimento N.R."/>
            <person name="Martins R.D."/>
            <person name="Rabello M.M."/>
            <person name="Hernandes M.Z."/>
            <person name="Toyama D.O."/>
            <person name="Toyama M.H."/>
            <person name="Martins A.M."/>
            <person name="Havt A."/>
            <person name="Monteiro H.S."/>
        </authorList>
    </citation>
    <scope>PROTEIN SEQUENCE</scope>
    <scope>FUNCTION</scope>
    <scope>MASS SPECTROMETRY</scope>
    <scope>3D-STRUCTURE MODELING</scope>
    <scope>SUBCELLULAR LOCATION</scope>
    <source>
        <tissue>Venom</tissue>
    </source>
</reference>